<evidence type="ECO:0000255" key="1">
    <source>
        <dbReference type="HAMAP-Rule" id="MF_01013"/>
    </source>
</evidence>
<keyword id="KW-0028">Amino-acid biosynthesis</keyword>
<keyword id="KW-0963">Cytoplasm</keyword>
<keyword id="KW-0368">Histidine biosynthesis</keyword>
<keyword id="KW-0456">Lyase</keyword>
<accession>A6QCU4</accession>
<reference key="1">
    <citation type="journal article" date="2007" name="Proc. Natl. Acad. Sci. U.S.A.">
        <title>Deep-sea vent epsilon-proteobacterial genomes provide insights into emergence of pathogens.</title>
        <authorList>
            <person name="Nakagawa S."/>
            <person name="Takaki Y."/>
            <person name="Shimamura S."/>
            <person name="Reysenbach A.-L."/>
            <person name="Takai K."/>
            <person name="Horikoshi K."/>
        </authorList>
    </citation>
    <scope>NUCLEOTIDE SEQUENCE [LARGE SCALE GENOMIC DNA]</scope>
    <source>
        <strain>NBC37-1</strain>
    </source>
</reference>
<name>HIS6_SULNB</name>
<comment type="function">
    <text evidence="1">IGPS catalyzes the conversion of PRFAR and glutamine to IGP, AICAR and glutamate. The HisF subunit catalyzes the cyclization activity that produces IGP and AICAR from PRFAR using the ammonia provided by the HisH subunit.</text>
</comment>
<comment type="catalytic activity">
    <reaction evidence="1">
        <text>5-[(5-phospho-1-deoxy-D-ribulos-1-ylimino)methylamino]-1-(5-phospho-beta-D-ribosyl)imidazole-4-carboxamide + L-glutamine = D-erythro-1-(imidazol-4-yl)glycerol 3-phosphate + 5-amino-1-(5-phospho-beta-D-ribosyl)imidazole-4-carboxamide + L-glutamate + H(+)</text>
        <dbReference type="Rhea" id="RHEA:24793"/>
        <dbReference type="ChEBI" id="CHEBI:15378"/>
        <dbReference type="ChEBI" id="CHEBI:29985"/>
        <dbReference type="ChEBI" id="CHEBI:58278"/>
        <dbReference type="ChEBI" id="CHEBI:58359"/>
        <dbReference type="ChEBI" id="CHEBI:58475"/>
        <dbReference type="ChEBI" id="CHEBI:58525"/>
        <dbReference type="EC" id="4.3.2.10"/>
    </reaction>
</comment>
<comment type="pathway">
    <text evidence="1">Amino-acid biosynthesis; L-histidine biosynthesis; L-histidine from 5-phospho-alpha-D-ribose 1-diphosphate: step 5/9.</text>
</comment>
<comment type="subunit">
    <text evidence="1">Heterodimer of HisH and HisF.</text>
</comment>
<comment type="subcellular location">
    <subcellularLocation>
        <location evidence="1">Cytoplasm</location>
    </subcellularLocation>
</comment>
<comment type="similarity">
    <text evidence="1">Belongs to the HisA/HisF family.</text>
</comment>
<gene>
    <name evidence="1" type="primary">hisF</name>
    <name type="ordered locus">SUN_2367</name>
</gene>
<dbReference type="EC" id="4.3.2.10" evidence="1"/>
<dbReference type="EMBL" id="AP009179">
    <property type="protein sequence ID" value="BAF73303.1"/>
    <property type="molecule type" value="Genomic_DNA"/>
</dbReference>
<dbReference type="RefSeq" id="WP_012084143.1">
    <property type="nucleotide sequence ID" value="NC_009663.1"/>
</dbReference>
<dbReference type="SMR" id="A6QCU4"/>
<dbReference type="STRING" id="387093.SUN_2367"/>
<dbReference type="KEGG" id="sun:SUN_2367"/>
<dbReference type="eggNOG" id="COG0107">
    <property type="taxonomic scope" value="Bacteria"/>
</dbReference>
<dbReference type="HOGENOM" id="CLU_048577_4_0_7"/>
<dbReference type="OrthoDB" id="9807749at2"/>
<dbReference type="UniPathway" id="UPA00031">
    <property type="reaction ID" value="UER00010"/>
</dbReference>
<dbReference type="Proteomes" id="UP000006378">
    <property type="component" value="Chromosome"/>
</dbReference>
<dbReference type="GO" id="GO:0005737">
    <property type="term" value="C:cytoplasm"/>
    <property type="evidence" value="ECO:0007669"/>
    <property type="project" value="UniProtKB-SubCell"/>
</dbReference>
<dbReference type="GO" id="GO:0000107">
    <property type="term" value="F:imidazoleglycerol-phosphate synthase activity"/>
    <property type="evidence" value="ECO:0007669"/>
    <property type="project" value="UniProtKB-UniRule"/>
</dbReference>
<dbReference type="GO" id="GO:0016829">
    <property type="term" value="F:lyase activity"/>
    <property type="evidence" value="ECO:0007669"/>
    <property type="project" value="UniProtKB-KW"/>
</dbReference>
<dbReference type="GO" id="GO:0000105">
    <property type="term" value="P:L-histidine biosynthetic process"/>
    <property type="evidence" value="ECO:0007669"/>
    <property type="project" value="UniProtKB-UniRule"/>
</dbReference>
<dbReference type="CDD" id="cd04731">
    <property type="entry name" value="HisF"/>
    <property type="match status" value="1"/>
</dbReference>
<dbReference type="FunFam" id="3.20.20.70:FF:000006">
    <property type="entry name" value="Imidazole glycerol phosphate synthase subunit HisF"/>
    <property type="match status" value="1"/>
</dbReference>
<dbReference type="Gene3D" id="3.20.20.70">
    <property type="entry name" value="Aldolase class I"/>
    <property type="match status" value="1"/>
</dbReference>
<dbReference type="HAMAP" id="MF_01013">
    <property type="entry name" value="HisF"/>
    <property type="match status" value="1"/>
</dbReference>
<dbReference type="InterPro" id="IPR013785">
    <property type="entry name" value="Aldolase_TIM"/>
</dbReference>
<dbReference type="InterPro" id="IPR006062">
    <property type="entry name" value="His_biosynth"/>
</dbReference>
<dbReference type="InterPro" id="IPR004651">
    <property type="entry name" value="HisF"/>
</dbReference>
<dbReference type="InterPro" id="IPR050064">
    <property type="entry name" value="IGPS_HisA/HisF"/>
</dbReference>
<dbReference type="InterPro" id="IPR011060">
    <property type="entry name" value="RibuloseP-bd_barrel"/>
</dbReference>
<dbReference type="NCBIfam" id="TIGR00735">
    <property type="entry name" value="hisF"/>
    <property type="match status" value="1"/>
</dbReference>
<dbReference type="PANTHER" id="PTHR21235:SF2">
    <property type="entry name" value="IMIDAZOLE GLYCEROL PHOSPHATE SYNTHASE HISHF"/>
    <property type="match status" value="1"/>
</dbReference>
<dbReference type="PANTHER" id="PTHR21235">
    <property type="entry name" value="IMIDAZOLE GLYCEROL PHOSPHATE SYNTHASE SUBUNIT HISF/H IGP SYNTHASE SUBUNIT HISF/H"/>
    <property type="match status" value="1"/>
</dbReference>
<dbReference type="Pfam" id="PF00977">
    <property type="entry name" value="His_biosynth"/>
    <property type="match status" value="1"/>
</dbReference>
<dbReference type="SUPFAM" id="SSF51366">
    <property type="entry name" value="Ribulose-phoshate binding barrel"/>
    <property type="match status" value="1"/>
</dbReference>
<organism>
    <name type="scientific">Sulfurovum sp. (strain NBC37-1)</name>
    <dbReference type="NCBI Taxonomy" id="387093"/>
    <lineage>
        <taxon>Bacteria</taxon>
        <taxon>Pseudomonadati</taxon>
        <taxon>Campylobacterota</taxon>
        <taxon>Epsilonproteobacteria</taxon>
        <taxon>Campylobacterales</taxon>
        <taxon>Sulfurovaceae</taxon>
        <taxon>Sulfurovum</taxon>
    </lineage>
</organism>
<feature type="chain" id="PRO_1000063162" description="Imidazole glycerol phosphate synthase subunit HisF">
    <location>
        <begin position="1"/>
        <end position="254"/>
    </location>
</feature>
<feature type="active site" evidence="1">
    <location>
        <position position="13"/>
    </location>
</feature>
<feature type="active site" evidence="1">
    <location>
        <position position="132"/>
    </location>
</feature>
<proteinExistence type="inferred from homology"/>
<sequence length="254" mass="27695">MDYFAKRIIPCLDVNEGRVVKGVNFVGLRDAGDPVEVAKRYNEEGADEITFLDIGASHEGRDTIVDVVKKVAQEVFIPLTVGGGIRELPDIYNLLNVGCDKVSINSAAIKRPEFIEEGAKRFGSQCIVVAIDAKRVGNGKWHIFTHGGRNDTGIDALQWAKEAYERGAGELLVTSMDADGTKAGFDNELNRKIGELVNIPVIASGGAGTMQHIEEAFTLGNADAALAASIFHFREIDIMELKHYLKTKNIPVRI</sequence>
<protein>
    <recommendedName>
        <fullName evidence="1">Imidazole glycerol phosphate synthase subunit HisF</fullName>
        <ecNumber evidence="1">4.3.2.10</ecNumber>
    </recommendedName>
    <alternativeName>
        <fullName evidence="1">IGP synthase cyclase subunit</fullName>
    </alternativeName>
    <alternativeName>
        <fullName evidence="1">IGP synthase subunit HisF</fullName>
    </alternativeName>
    <alternativeName>
        <fullName evidence="1">ImGP synthase subunit HisF</fullName>
        <shortName evidence="1">IGPS subunit HisF</shortName>
    </alternativeName>
</protein>